<evidence type="ECO:0000250" key="1"/>
<evidence type="ECO:0000250" key="2">
    <source>
        <dbReference type="UniProtKB" id="P00157"/>
    </source>
</evidence>
<evidence type="ECO:0000255" key="3">
    <source>
        <dbReference type="PROSITE-ProRule" id="PRU00967"/>
    </source>
</evidence>
<evidence type="ECO:0000255" key="4">
    <source>
        <dbReference type="PROSITE-ProRule" id="PRU00968"/>
    </source>
</evidence>
<evidence type="ECO:0000305" key="5"/>
<protein>
    <recommendedName>
        <fullName>Cytochrome b</fullName>
    </recommendedName>
    <alternativeName>
        <fullName>Complex III subunit 3</fullName>
    </alternativeName>
    <alternativeName>
        <fullName>Complex III subunit III</fullName>
    </alternativeName>
    <alternativeName>
        <fullName>Cytochrome b-c1 complex subunit 3</fullName>
    </alternativeName>
    <alternativeName>
        <fullName>Ubiquinol-cytochrome-c reductase complex cytochrome b subunit</fullName>
    </alternativeName>
</protein>
<keyword id="KW-0249">Electron transport</keyword>
<keyword id="KW-0349">Heme</keyword>
<keyword id="KW-0408">Iron</keyword>
<keyword id="KW-0472">Membrane</keyword>
<keyword id="KW-0479">Metal-binding</keyword>
<keyword id="KW-0496">Mitochondrion</keyword>
<keyword id="KW-0999">Mitochondrion inner membrane</keyword>
<keyword id="KW-0679">Respiratory chain</keyword>
<keyword id="KW-0812">Transmembrane</keyword>
<keyword id="KW-1133">Transmembrane helix</keyword>
<keyword id="KW-0813">Transport</keyword>
<keyword id="KW-0830">Ubiquinone</keyword>
<gene>
    <name type="primary">MT-CYB</name>
    <name type="synonym">COB</name>
    <name type="synonym">CYTB</name>
    <name type="synonym">MTCYB</name>
</gene>
<name>CYB_STEAT</name>
<sequence length="379" mass="42698">MTNIRKTHPLMKILNDAFIDLPTPSNISSWWNFGSLLGLCLIMQILTGLFLAMHYTPDTSTAFSSVAHICRDVNYGWFIRYLHANGASMFFICLYAHIGRGLYYGSYMFQETWNIGVLLLLTVMATAFVGYVLPWGQMSFWGATVITNLLSAIPYIGTTLVEWIWGGFSVDKATLTRFFAFHFILPFIITALAAVHLLFLHETGSNNPTGIPSNMDMIPFHPYYTIKDILGALLLILTLLALTLFTPDLLGDPDNYTPANPLSTPAHIKPEWYFLFAYAILRSIPNKLGGVLALLLSILVLIFIPMLQTSKQRSMMFRPFSQLLFWTLIADLLTLTWIGGQPVEHPYIIVGQLASILYFLLILVLMPTAGLIENKLLKW</sequence>
<feature type="chain" id="PRO_0000061611" description="Cytochrome b">
    <location>
        <begin position="1"/>
        <end position="379"/>
    </location>
</feature>
<feature type="transmembrane region" description="Helical" evidence="2">
    <location>
        <begin position="33"/>
        <end position="53"/>
    </location>
</feature>
<feature type="transmembrane region" description="Helical" evidence="2">
    <location>
        <begin position="77"/>
        <end position="98"/>
    </location>
</feature>
<feature type="transmembrane region" description="Helical" evidence="2">
    <location>
        <begin position="113"/>
        <end position="133"/>
    </location>
</feature>
<feature type="transmembrane region" description="Helical" evidence="2">
    <location>
        <begin position="178"/>
        <end position="198"/>
    </location>
</feature>
<feature type="transmembrane region" description="Helical" evidence="2">
    <location>
        <begin position="226"/>
        <end position="246"/>
    </location>
</feature>
<feature type="transmembrane region" description="Helical" evidence="2">
    <location>
        <begin position="288"/>
        <end position="308"/>
    </location>
</feature>
<feature type="transmembrane region" description="Helical" evidence="2">
    <location>
        <begin position="320"/>
        <end position="340"/>
    </location>
</feature>
<feature type="transmembrane region" description="Helical" evidence="2">
    <location>
        <begin position="347"/>
        <end position="367"/>
    </location>
</feature>
<feature type="binding site" description="axial binding residue" evidence="2">
    <location>
        <position position="83"/>
    </location>
    <ligand>
        <name>heme b</name>
        <dbReference type="ChEBI" id="CHEBI:60344"/>
        <label>b562</label>
    </ligand>
    <ligandPart>
        <name>Fe</name>
        <dbReference type="ChEBI" id="CHEBI:18248"/>
    </ligandPart>
</feature>
<feature type="binding site" description="axial binding residue" evidence="2">
    <location>
        <position position="97"/>
    </location>
    <ligand>
        <name>heme b</name>
        <dbReference type="ChEBI" id="CHEBI:60344"/>
        <label>b566</label>
    </ligand>
    <ligandPart>
        <name>Fe</name>
        <dbReference type="ChEBI" id="CHEBI:18248"/>
    </ligandPart>
</feature>
<feature type="binding site" description="axial binding residue" evidence="2">
    <location>
        <position position="182"/>
    </location>
    <ligand>
        <name>heme b</name>
        <dbReference type="ChEBI" id="CHEBI:60344"/>
        <label>b562</label>
    </ligand>
    <ligandPart>
        <name>Fe</name>
        <dbReference type="ChEBI" id="CHEBI:18248"/>
    </ligandPart>
</feature>
<feature type="binding site" description="axial binding residue" evidence="2">
    <location>
        <position position="196"/>
    </location>
    <ligand>
        <name>heme b</name>
        <dbReference type="ChEBI" id="CHEBI:60344"/>
        <label>b566</label>
    </ligand>
    <ligandPart>
        <name>Fe</name>
        <dbReference type="ChEBI" id="CHEBI:18248"/>
    </ligandPart>
</feature>
<feature type="binding site" evidence="2">
    <location>
        <position position="201"/>
    </location>
    <ligand>
        <name>a ubiquinone</name>
        <dbReference type="ChEBI" id="CHEBI:16389"/>
    </ligand>
</feature>
<feature type="sequence conflict" description="In Ref. 1; CAA39741." evidence="5" ref="1">
    <original>A</original>
    <variation>G</variation>
    <location>
        <position position="232"/>
    </location>
</feature>
<feature type="sequence conflict" description="In Ref. 1; CAA39741." evidence="5" ref="1">
    <original>G</original>
    <variation>A</variation>
    <location>
        <position position="289"/>
    </location>
</feature>
<comment type="function">
    <text evidence="2">Component of the ubiquinol-cytochrome c reductase complex (complex III or cytochrome b-c1 complex) that is part of the mitochondrial respiratory chain. The b-c1 complex mediates electron transfer from ubiquinol to cytochrome c. Contributes to the generation of a proton gradient across the mitochondrial membrane that is then used for ATP synthesis.</text>
</comment>
<comment type="cofactor">
    <cofactor evidence="2">
        <name>heme b</name>
        <dbReference type="ChEBI" id="CHEBI:60344"/>
    </cofactor>
    <text evidence="2">Binds 2 heme b groups non-covalently.</text>
</comment>
<comment type="subunit">
    <text evidence="2">The cytochrome bc1 complex contains 11 subunits: 3 respiratory subunits (MT-CYB, CYC1 and UQCRFS1), 2 core proteins (UQCRC1 and UQCRC2) and 6 low-molecular weight proteins (UQCRH/QCR6, UQCRB/QCR7, UQCRQ/QCR8, UQCR10/QCR9, UQCR11/QCR10 and a cleavage product of UQCRFS1). This cytochrome bc1 complex then forms a dimer.</text>
</comment>
<comment type="subcellular location">
    <subcellularLocation>
        <location evidence="2">Mitochondrion inner membrane</location>
        <topology evidence="2">Multi-pass membrane protein</topology>
    </subcellularLocation>
</comment>
<comment type="miscellaneous">
    <text evidence="1">Heme 1 (or BL or b562) is low-potential and absorbs at about 562 nm, and heme 2 (or BH or b566) is high-potential and absorbs at about 566 nm.</text>
</comment>
<comment type="similarity">
    <text evidence="3 4">Belongs to the cytochrome b family.</text>
</comment>
<comment type="caution">
    <text evidence="2">The full-length protein contains only eight transmembrane helices, not nine as predicted by bioinformatics tools.</text>
</comment>
<reference key="1">
    <citation type="journal article" date="1991" name="J. Mol. Evol.">
        <title>Evolution of the cytochrome b gene of mammals.</title>
        <authorList>
            <person name="Irwin D.M."/>
            <person name="Kocher T.D."/>
            <person name="Wilson A.C."/>
        </authorList>
    </citation>
    <scope>NUCLEOTIDE SEQUENCE [GENOMIC DNA]</scope>
</reference>
<reference key="2">
    <citation type="journal article" date="1999" name="Mar. Mamm. Sci.">
        <title>Phylogenetic relationships among the delphinid cetaceans based on full cytochrome b sequences.</title>
        <authorList>
            <person name="LeDuc R.G."/>
            <person name="Perrin W.F."/>
            <person name="Dizon A.E."/>
        </authorList>
    </citation>
    <scope>NUCLEOTIDE SEQUENCE [GENOMIC DNA]</scope>
</reference>
<dbReference type="EMBL" id="X56294">
    <property type="protein sequence ID" value="CAA39741.1"/>
    <property type="molecule type" value="Genomic_DNA"/>
</dbReference>
<dbReference type="EMBL" id="AF084096">
    <property type="protein sequence ID" value="AAD54473.1"/>
    <property type="molecule type" value="Genomic_DNA"/>
</dbReference>
<dbReference type="EMBL" id="AF084097">
    <property type="protein sequence ID" value="AAD54474.1"/>
    <property type="molecule type" value="Genomic_DNA"/>
</dbReference>
<dbReference type="PIR" id="S17415">
    <property type="entry name" value="S17415"/>
</dbReference>
<dbReference type="SMR" id="P68092"/>
<dbReference type="GO" id="GO:0005743">
    <property type="term" value="C:mitochondrial inner membrane"/>
    <property type="evidence" value="ECO:0007669"/>
    <property type="project" value="UniProtKB-SubCell"/>
</dbReference>
<dbReference type="GO" id="GO:0045275">
    <property type="term" value="C:respiratory chain complex III"/>
    <property type="evidence" value="ECO:0007669"/>
    <property type="project" value="InterPro"/>
</dbReference>
<dbReference type="GO" id="GO:0046872">
    <property type="term" value="F:metal ion binding"/>
    <property type="evidence" value="ECO:0007669"/>
    <property type="project" value="UniProtKB-KW"/>
</dbReference>
<dbReference type="GO" id="GO:0008121">
    <property type="term" value="F:ubiquinol-cytochrome-c reductase activity"/>
    <property type="evidence" value="ECO:0007669"/>
    <property type="project" value="InterPro"/>
</dbReference>
<dbReference type="GO" id="GO:0006122">
    <property type="term" value="P:mitochondrial electron transport, ubiquinol to cytochrome c"/>
    <property type="evidence" value="ECO:0007669"/>
    <property type="project" value="TreeGrafter"/>
</dbReference>
<dbReference type="CDD" id="cd00290">
    <property type="entry name" value="cytochrome_b_C"/>
    <property type="match status" value="1"/>
</dbReference>
<dbReference type="CDD" id="cd00284">
    <property type="entry name" value="Cytochrome_b_N"/>
    <property type="match status" value="1"/>
</dbReference>
<dbReference type="FunFam" id="1.20.810.10:FF:000002">
    <property type="entry name" value="Cytochrome b"/>
    <property type="match status" value="1"/>
</dbReference>
<dbReference type="Gene3D" id="1.20.810.10">
    <property type="entry name" value="Cytochrome Bc1 Complex, Chain C"/>
    <property type="match status" value="1"/>
</dbReference>
<dbReference type="InterPro" id="IPR005798">
    <property type="entry name" value="Cyt_b/b6_C"/>
</dbReference>
<dbReference type="InterPro" id="IPR036150">
    <property type="entry name" value="Cyt_b/b6_C_sf"/>
</dbReference>
<dbReference type="InterPro" id="IPR005797">
    <property type="entry name" value="Cyt_b/b6_N"/>
</dbReference>
<dbReference type="InterPro" id="IPR027387">
    <property type="entry name" value="Cytb/b6-like_sf"/>
</dbReference>
<dbReference type="InterPro" id="IPR030689">
    <property type="entry name" value="Cytochrome_b"/>
</dbReference>
<dbReference type="InterPro" id="IPR048260">
    <property type="entry name" value="Cytochrome_b_C_euk/bac"/>
</dbReference>
<dbReference type="InterPro" id="IPR048259">
    <property type="entry name" value="Cytochrome_b_N_euk/bac"/>
</dbReference>
<dbReference type="InterPro" id="IPR016174">
    <property type="entry name" value="Di-haem_cyt_TM"/>
</dbReference>
<dbReference type="PANTHER" id="PTHR19271">
    <property type="entry name" value="CYTOCHROME B"/>
    <property type="match status" value="1"/>
</dbReference>
<dbReference type="PANTHER" id="PTHR19271:SF16">
    <property type="entry name" value="CYTOCHROME B"/>
    <property type="match status" value="1"/>
</dbReference>
<dbReference type="Pfam" id="PF00032">
    <property type="entry name" value="Cytochrom_B_C"/>
    <property type="match status" value="1"/>
</dbReference>
<dbReference type="Pfam" id="PF00033">
    <property type="entry name" value="Cytochrome_B"/>
    <property type="match status" value="1"/>
</dbReference>
<dbReference type="PIRSF" id="PIRSF038885">
    <property type="entry name" value="COB"/>
    <property type="match status" value="1"/>
</dbReference>
<dbReference type="SUPFAM" id="SSF81648">
    <property type="entry name" value="a domain/subunit of cytochrome bc1 complex (Ubiquinol-cytochrome c reductase)"/>
    <property type="match status" value="1"/>
</dbReference>
<dbReference type="SUPFAM" id="SSF81342">
    <property type="entry name" value="Transmembrane di-heme cytochromes"/>
    <property type="match status" value="1"/>
</dbReference>
<dbReference type="PROSITE" id="PS51003">
    <property type="entry name" value="CYTB_CTER"/>
    <property type="match status" value="1"/>
</dbReference>
<dbReference type="PROSITE" id="PS51002">
    <property type="entry name" value="CYTB_NTER"/>
    <property type="match status" value="1"/>
</dbReference>
<organism>
    <name type="scientific">Stenella attenuata</name>
    <name type="common">Pantropical spotted dolphin</name>
    <name type="synonym">Steno attenuatus</name>
    <dbReference type="NCBI Taxonomy" id="9735"/>
    <lineage>
        <taxon>Eukaryota</taxon>
        <taxon>Metazoa</taxon>
        <taxon>Chordata</taxon>
        <taxon>Craniata</taxon>
        <taxon>Vertebrata</taxon>
        <taxon>Euteleostomi</taxon>
        <taxon>Mammalia</taxon>
        <taxon>Eutheria</taxon>
        <taxon>Laurasiatheria</taxon>
        <taxon>Artiodactyla</taxon>
        <taxon>Whippomorpha</taxon>
        <taxon>Cetacea</taxon>
        <taxon>Odontoceti</taxon>
        <taxon>Delphinidae</taxon>
        <taxon>Stenella</taxon>
    </lineage>
</organism>
<accession>P68092</accession>
<accession>P24961</accession>
<accession>Q9T3G9</accession>
<geneLocation type="mitochondrion"/>
<proteinExistence type="inferred from homology"/>